<reference key="1">
    <citation type="journal article" date="2008" name="BMC Genomics">
        <title>Genomics of an extreme psychrophile, Psychromonas ingrahamii.</title>
        <authorList>
            <person name="Riley M."/>
            <person name="Staley J.T."/>
            <person name="Danchin A."/>
            <person name="Wang T.Z."/>
            <person name="Brettin T.S."/>
            <person name="Hauser L.J."/>
            <person name="Land M.L."/>
            <person name="Thompson L.S."/>
        </authorList>
    </citation>
    <scope>NUCLEOTIDE SEQUENCE [LARGE SCALE GENOMIC DNA]</scope>
    <source>
        <strain>DSM 17664 / CCUG 51855 / 37</strain>
    </source>
</reference>
<proteinExistence type="inferred from homology"/>
<organism>
    <name type="scientific">Psychromonas ingrahamii (strain DSM 17664 / CCUG 51855 / 37)</name>
    <dbReference type="NCBI Taxonomy" id="357804"/>
    <lineage>
        <taxon>Bacteria</taxon>
        <taxon>Pseudomonadati</taxon>
        <taxon>Pseudomonadota</taxon>
        <taxon>Gammaproteobacteria</taxon>
        <taxon>Alteromonadales</taxon>
        <taxon>Psychromonadaceae</taxon>
        <taxon>Psychromonas</taxon>
    </lineage>
</organism>
<name>ATPB2_PSYIN</name>
<dbReference type="EC" id="7.1.2.2" evidence="1"/>
<dbReference type="EMBL" id="CP000510">
    <property type="protein sequence ID" value="ABM05404.1"/>
    <property type="molecule type" value="Genomic_DNA"/>
</dbReference>
<dbReference type="RefSeq" id="WP_011771952.1">
    <property type="nucleotide sequence ID" value="NC_008709.1"/>
</dbReference>
<dbReference type="SMR" id="A1T0Y9"/>
<dbReference type="STRING" id="357804.Ping_3730"/>
<dbReference type="KEGG" id="pin:Ping_3730"/>
<dbReference type="eggNOG" id="COG0055">
    <property type="taxonomic scope" value="Bacteria"/>
</dbReference>
<dbReference type="HOGENOM" id="CLU_022398_0_2_6"/>
<dbReference type="OrthoDB" id="9801639at2"/>
<dbReference type="Proteomes" id="UP000000639">
    <property type="component" value="Chromosome"/>
</dbReference>
<dbReference type="GO" id="GO:0005886">
    <property type="term" value="C:plasma membrane"/>
    <property type="evidence" value="ECO:0007669"/>
    <property type="project" value="UniProtKB-SubCell"/>
</dbReference>
<dbReference type="GO" id="GO:0045259">
    <property type="term" value="C:proton-transporting ATP synthase complex"/>
    <property type="evidence" value="ECO:0007669"/>
    <property type="project" value="UniProtKB-KW"/>
</dbReference>
<dbReference type="GO" id="GO:0005524">
    <property type="term" value="F:ATP binding"/>
    <property type="evidence" value="ECO:0007669"/>
    <property type="project" value="UniProtKB-UniRule"/>
</dbReference>
<dbReference type="GO" id="GO:0016887">
    <property type="term" value="F:ATP hydrolysis activity"/>
    <property type="evidence" value="ECO:0007669"/>
    <property type="project" value="InterPro"/>
</dbReference>
<dbReference type="GO" id="GO:0046933">
    <property type="term" value="F:proton-transporting ATP synthase activity, rotational mechanism"/>
    <property type="evidence" value="ECO:0007669"/>
    <property type="project" value="UniProtKB-UniRule"/>
</dbReference>
<dbReference type="CDD" id="cd18110">
    <property type="entry name" value="ATP-synt_F1_beta_C"/>
    <property type="match status" value="1"/>
</dbReference>
<dbReference type="CDD" id="cd18115">
    <property type="entry name" value="ATP-synt_F1_beta_N"/>
    <property type="match status" value="1"/>
</dbReference>
<dbReference type="CDD" id="cd01133">
    <property type="entry name" value="F1-ATPase_beta_CD"/>
    <property type="match status" value="1"/>
</dbReference>
<dbReference type="FunFam" id="1.10.1140.10:FF:000001">
    <property type="entry name" value="ATP synthase subunit beta"/>
    <property type="match status" value="1"/>
</dbReference>
<dbReference type="FunFam" id="3.40.50.300:FF:000004">
    <property type="entry name" value="ATP synthase subunit beta"/>
    <property type="match status" value="1"/>
</dbReference>
<dbReference type="Gene3D" id="2.40.10.170">
    <property type="match status" value="1"/>
</dbReference>
<dbReference type="Gene3D" id="1.10.1140.10">
    <property type="entry name" value="Bovine Mitochondrial F1-atpase, Atp Synthase Beta Chain, Chain D, domain 3"/>
    <property type="match status" value="1"/>
</dbReference>
<dbReference type="Gene3D" id="3.40.50.300">
    <property type="entry name" value="P-loop containing nucleotide triphosphate hydrolases"/>
    <property type="match status" value="1"/>
</dbReference>
<dbReference type="HAMAP" id="MF_01347">
    <property type="entry name" value="ATP_synth_beta_bact"/>
    <property type="match status" value="1"/>
</dbReference>
<dbReference type="InterPro" id="IPR003593">
    <property type="entry name" value="AAA+_ATPase"/>
</dbReference>
<dbReference type="InterPro" id="IPR055190">
    <property type="entry name" value="ATP-synt_VA_C"/>
</dbReference>
<dbReference type="InterPro" id="IPR005722">
    <property type="entry name" value="ATP_synth_F1_bsu"/>
</dbReference>
<dbReference type="InterPro" id="IPR020003">
    <property type="entry name" value="ATPase_a/bsu_AS"/>
</dbReference>
<dbReference type="InterPro" id="IPR050053">
    <property type="entry name" value="ATPase_alpha/beta_chains"/>
</dbReference>
<dbReference type="InterPro" id="IPR004100">
    <property type="entry name" value="ATPase_F1/V1/A1_a/bsu_N"/>
</dbReference>
<dbReference type="InterPro" id="IPR036121">
    <property type="entry name" value="ATPase_F1/V1/A1_a/bsu_N_sf"/>
</dbReference>
<dbReference type="InterPro" id="IPR000194">
    <property type="entry name" value="ATPase_F1/V1/A1_a/bsu_nucl-bd"/>
</dbReference>
<dbReference type="InterPro" id="IPR024034">
    <property type="entry name" value="ATPase_F1/V1_b/a_C"/>
</dbReference>
<dbReference type="InterPro" id="IPR027417">
    <property type="entry name" value="P-loop_NTPase"/>
</dbReference>
<dbReference type="NCBIfam" id="TIGR01039">
    <property type="entry name" value="atpD"/>
    <property type="match status" value="1"/>
</dbReference>
<dbReference type="PANTHER" id="PTHR15184">
    <property type="entry name" value="ATP SYNTHASE"/>
    <property type="match status" value="1"/>
</dbReference>
<dbReference type="PANTHER" id="PTHR15184:SF71">
    <property type="entry name" value="ATP SYNTHASE SUBUNIT BETA, MITOCHONDRIAL"/>
    <property type="match status" value="1"/>
</dbReference>
<dbReference type="Pfam" id="PF00006">
    <property type="entry name" value="ATP-synt_ab"/>
    <property type="match status" value="1"/>
</dbReference>
<dbReference type="Pfam" id="PF02874">
    <property type="entry name" value="ATP-synt_ab_N"/>
    <property type="match status" value="1"/>
</dbReference>
<dbReference type="Pfam" id="PF22919">
    <property type="entry name" value="ATP-synt_VA_C"/>
    <property type="match status" value="1"/>
</dbReference>
<dbReference type="SMART" id="SM00382">
    <property type="entry name" value="AAA"/>
    <property type="match status" value="1"/>
</dbReference>
<dbReference type="SUPFAM" id="SSF47917">
    <property type="entry name" value="C-terminal domain of alpha and beta subunits of F1 ATP synthase"/>
    <property type="match status" value="1"/>
</dbReference>
<dbReference type="SUPFAM" id="SSF50615">
    <property type="entry name" value="N-terminal domain of alpha and beta subunits of F1 ATP synthase"/>
    <property type="match status" value="1"/>
</dbReference>
<dbReference type="SUPFAM" id="SSF52540">
    <property type="entry name" value="P-loop containing nucleoside triphosphate hydrolases"/>
    <property type="match status" value="1"/>
</dbReference>
<dbReference type="PROSITE" id="PS00152">
    <property type="entry name" value="ATPASE_ALPHA_BETA"/>
    <property type="match status" value="1"/>
</dbReference>
<comment type="function">
    <text evidence="1">Produces ATP from ADP in the presence of a proton gradient across the membrane. The catalytic sites are hosted primarily by the beta subunits.</text>
</comment>
<comment type="catalytic activity">
    <reaction evidence="1">
        <text>ATP + H2O + 4 H(+)(in) = ADP + phosphate + 5 H(+)(out)</text>
        <dbReference type="Rhea" id="RHEA:57720"/>
        <dbReference type="ChEBI" id="CHEBI:15377"/>
        <dbReference type="ChEBI" id="CHEBI:15378"/>
        <dbReference type="ChEBI" id="CHEBI:30616"/>
        <dbReference type="ChEBI" id="CHEBI:43474"/>
        <dbReference type="ChEBI" id="CHEBI:456216"/>
        <dbReference type="EC" id="7.1.2.2"/>
    </reaction>
</comment>
<comment type="subunit">
    <text evidence="1">F-type ATPases have 2 components, CF(1) - the catalytic core - and CF(0) - the membrane proton channel. CF(1) has five subunits: alpha(3), beta(3), gamma(1), delta(1), epsilon(1). CF(0) has three main subunits: a(1), b(2) and c(9-12). The alpha and beta chains form an alternating ring which encloses part of the gamma chain. CF(1) is attached to CF(0) by a central stalk formed by the gamma and epsilon chains, while a peripheral stalk is formed by the delta and b chains.</text>
</comment>
<comment type="subcellular location">
    <subcellularLocation>
        <location evidence="1">Cell inner membrane</location>
        <topology evidence="1">Peripheral membrane protein</topology>
    </subcellularLocation>
</comment>
<comment type="similarity">
    <text evidence="1">Belongs to the ATPase alpha/beta chains family.</text>
</comment>
<feature type="chain" id="PRO_0000339575" description="ATP synthase subunit beta 2">
    <location>
        <begin position="1"/>
        <end position="465"/>
    </location>
</feature>
<feature type="binding site" evidence="1">
    <location>
        <begin position="148"/>
        <end position="155"/>
    </location>
    <ligand>
        <name>ATP</name>
        <dbReference type="ChEBI" id="CHEBI:30616"/>
    </ligand>
</feature>
<protein>
    <recommendedName>
        <fullName evidence="1">ATP synthase subunit beta 2</fullName>
        <ecNumber evidence="1">7.1.2.2</ecNumber>
    </recommendedName>
    <alternativeName>
        <fullName evidence="1">ATP synthase F1 sector subunit beta 2</fullName>
    </alternativeName>
    <alternativeName>
        <fullName evidence="1">F-ATPase subunit beta 2</fullName>
    </alternativeName>
</protein>
<sequence>MSTGKIIQVIGAVVDVEFPQETVPNIYSALIVTAKNLTMEVQQQIGGGVVRCIAMGASDGLSRGLDVTDTGKPITVPVGTATLGRIMNVLGEPIDMCGEIGATEHYGIHREAPTYEEQSASVATLEVGIKVIDLICPFSKGGKIGLFGGAGVGKTVNMMELINNIALKHSGLSVFAGVGERTREGNDFYFEMQEAGVVNVEKPELSKVAMVYGQMNEPPGNRLRVALTGLTMAERFRDEGKDVLLFIDNIYRYTLAGTEVSALLGRMPSAVGYQPTLAEEMGVLQERITSTKTGSITSIQAVYVPADDLTDPAPATTFAHLDATVVLNRSIASMGLYPAIDPLDSTSRQLDPLVVGQEHYDIARGVQGTLQRYKELKDIIAILGMDELSEDDKLVVSRARKIGNFLTQAYHVAEVFTGDPGMYVPLKDTLAGFKGLLAGDYDDLPEQAFLYIGAIEEAVEKAKKM</sequence>
<keyword id="KW-0066">ATP synthesis</keyword>
<keyword id="KW-0067">ATP-binding</keyword>
<keyword id="KW-0997">Cell inner membrane</keyword>
<keyword id="KW-1003">Cell membrane</keyword>
<keyword id="KW-0139">CF(1)</keyword>
<keyword id="KW-0375">Hydrogen ion transport</keyword>
<keyword id="KW-0406">Ion transport</keyword>
<keyword id="KW-0472">Membrane</keyword>
<keyword id="KW-0547">Nucleotide-binding</keyword>
<keyword id="KW-1185">Reference proteome</keyword>
<keyword id="KW-1278">Translocase</keyword>
<keyword id="KW-0813">Transport</keyword>
<gene>
    <name evidence="1" type="primary">atpD2</name>
    <name type="ordered locus">Ping_3730</name>
</gene>
<accession>A1T0Y9</accession>
<evidence type="ECO:0000255" key="1">
    <source>
        <dbReference type="HAMAP-Rule" id="MF_01347"/>
    </source>
</evidence>